<gene>
    <name evidence="1" type="primary">psbC</name>
</gene>
<geneLocation type="chloroplast"/>
<comment type="function">
    <text evidence="1">One of the components of the core complex of photosystem II (PSII). It binds chlorophyll and helps catalyze the primary light-induced photochemical processes of PSII. PSII is a light-driven water:plastoquinone oxidoreductase, using light energy to abstract electrons from H(2)O, generating O(2) and a proton gradient subsequently used for ATP formation.</text>
</comment>
<comment type="cofactor">
    <text evidence="1">Binds multiple chlorophylls and provides some of the ligands for the Ca-4Mn-5O cluster of the oxygen-evolving complex. It may also provide a ligand for a Cl- that is required for oxygen evolution. PSII binds additional chlorophylls, carotenoids and specific lipids.</text>
</comment>
<comment type="subunit">
    <text evidence="1">PSII is composed of 1 copy each of membrane proteins PsbA, PsbB, PsbC, PsbD, PsbE, PsbF, PsbH, PsbI, PsbJ, PsbK, PsbL, PsbM, PsbT, PsbX, PsbY, PsbZ, Psb30/Ycf12, at least 3 peripheral proteins of the oxygen-evolving complex and a large number of cofactors. It forms dimeric complexes.</text>
</comment>
<comment type="subcellular location">
    <subcellularLocation>
        <location evidence="1 3">Plastid</location>
        <location evidence="1 3">Chloroplast thylakoid membrane</location>
        <topology evidence="1">Multi-pass membrane protein</topology>
    </subcellularLocation>
</comment>
<comment type="PTM">
    <text evidence="2">Over time a tryptophan in the fifth lumenal loop is converted to 2-hydroxy-2,3-dihydrotryptophan, 2-oxo-2,3-dihydrotryptophan, and kynurenine by oxidizing species from the active site. This oxidation targets the protein for turnover.</text>
</comment>
<comment type="similarity">
    <text evidence="1">Belongs to the PsbB/PsbC family. PsbC subfamily.</text>
</comment>
<comment type="caution">
    <text evidence="6">The oxidation form of Trp-365 is subject of controversy and could be the artifactual result of sample handling.</text>
</comment>
<organism>
    <name type="scientific">Spinacia oleracea</name>
    <name type="common">Spinach</name>
    <dbReference type="NCBI Taxonomy" id="3562"/>
    <lineage>
        <taxon>Eukaryota</taxon>
        <taxon>Viridiplantae</taxon>
        <taxon>Streptophyta</taxon>
        <taxon>Embryophyta</taxon>
        <taxon>Tracheophyta</taxon>
        <taxon>Spermatophyta</taxon>
        <taxon>Magnoliopsida</taxon>
        <taxon>eudicotyledons</taxon>
        <taxon>Gunneridae</taxon>
        <taxon>Pentapetalae</taxon>
        <taxon>Caryophyllales</taxon>
        <taxon>Chenopodiaceae</taxon>
        <taxon>Chenopodioideae</taxon>
        <taxon>Anserineae</taxon>
        <taxon>Spinacia</taxon>
    </lineage>
</organism>
<accession>P06003</accession>
<proteinExistence type="evidence at protein level"/>
<feature type="propeptide" id="PRO_0000029430" evidence="1 3">
    <location>
        <begin position="1"/>
        <end position="14"/>
    </location>
</feature>
<feature type="chain" id="PRO_0000029431" description="Photosystem II CP43 reaction center protein" evidence="1">
    <location>
        <begin position="15"/>
        <end position="473"/>
    </location>
</feature>
<feature type="propeptide" id="PRO_0000029432" evidence="3">
    <location>
        <begin position="426"/>
        <end position="473"/>
    </location>
</feature>
<feature type="transmembrane region" description="Helical" evidence="1">
    <location>
        <begin position="69"/>
        <end position="93"/>
    </location>
</feature>
<feature type="transmembrane region" description="Helical" evidence="1">
    <location>
        <begin position="134"/>
        <end position="155"/>
    </location>
</feature>
<feature type="transmembrane region" description="Helical" evidence="1">
    <location>
        <begin position="178"/>
        <end position="200"/>
    </location>
</feature>
<feature type="transmembrane region" description="Helical" evidence="1">
    <location>
        <begin position="255"/>
        <end position="275"/>
    </location>
</feature>
<feature type="transmembrane region" description="Helical" evidence="1">
    <location>
        <begin position="291"/>
        <end position="312"/>
    </location>
</feature>
<feature type="transmembrane region" description="Helical" evidence="1">
    <location>
        <begin position="447"/>
        <end position="471"/>
    </location>
</feature>
<feature type="binding site" evidence="1">
    <location>
        <position position="367"/>
    </location>
    <ligand>
        <name>[CaMn4O5] cluster</name>
        <dbReference type="ChEBI" id="CHEBI:189552"/>
    </ligand>
</feature>
<feature type="site" description="Susceptible to oxidation" evidence="2">
    <location>
        <position position="365"/>
    </location>
</feature>
<feature type="modified residue" description="N-acetylthreonine" evidence="1 3">
    <location>
        <position position="15"/>
    </location>
</feature>
<feature type="modified residue" description="Phosphothreonine" evidence="1 3">
    <location>
        <position position="15"/>
    </location>
</feature>
<feature type="mutagenesis site" description="Exhibits an increased rate of photoinhibition relative to wild-type." evidence="2">
    <original>W</original>
    <variation>A</variation>
    <variation>C</variation>
    <variation>L</variation>
    <location>
        <position position="365"/>
    </location>
</feature>
<feature type="helix" evidence="7">
    <location>
        <begin position="28"/>
        <end position="31"/>
    </location>
</feature>
<feature type="helix" evidence="7">
    <location>
        <begin position="35"/>
        <end position="42"/>
    </location>
</feature>
<feature type="helix" evidence="7">
    <location>
        <begin position="46"/>
        <end position="74"/>
    </location>
</feature>
<feature type="turn" evidence="7">
    <location>
        <begin position="81"/>
        <end position="85"/>
    </location>
</feature>
<feature type="helix" evidence="7">
    <location>
        <begin position="88"/>
        <end position="94"/>
    </location>
</feature>
<feature type="turn" evidence="7">
    <location>
        <begin position="95"/>
        <end position="98"/>
    </location>
</feature>
<feature type="helix" evidence="7">
    <location>
        <begin position="101"/>
        <end position="103"/>
    </location>
</feature>
<feature type="helix" evidence="7">
    <location>
        <begin position="109"/>
        <end position="132"/>
    </location>
</feature>
<feature type="turn" evidence="7">
    <location>
        <begin position="133"/>
        <end position="135"/>
    </location>
</feature>
<feature type="turn" evidence="7">
    <location>
        <begin position="140"/>
        <end position="143"/>
    </location>
</feature>
<feature type="turn" evidence="7">
    <location>
        <begin position="145"/>
        <end position="147"/>
    </location>
</feature>
<feature type="helix" evidence="7">
    <location>
        <begin position="154"/>
        <end position="180"/>
    </location>
</feature>
<feature type="strand" evidence="7">
    <location>
        <begin position="185"/>
        <end position="187"/>
    </location>
</feature>
<feature type="strand" evidence="7">
    <location>
        <begin position="193"/>
        <end position="197"/>
    </location>
</feature>
<feature type="helix" evidence="7">
    <location>
        <begin position="206"/>
        <end position="213"/>
    </location>
</feature>
<feature type="turn" evidence="7">
    <location>
        <begin position="219"/>
        <end position="221"/>
    </location>
</feature>
<feature type="helix" evidence="7">
    <location>
        <begin position="223"/>
        <end position="226"/>
    </location>
</feature>
<feature type="helix" evidence="7">
    <location>
        <begin position="230"/>
        <end position="253"/>
    </location>
</feature>
<feature type="helix" evidence="7">
    <location>
        <begin position="258"/>
        <end position="263"/>
    </location>
</feature>
<feature type="helix" evidence="7">
    <location>
        <begin position="268"/>
        <end position="292"/>
    </location>
</feature>
<feature type="turn" evidence="7">
    <location>
        <begin position="295"/>
        <end position="298"/>
    </location>
</feature>
<feature type="helix" evidence="7">
    <location>
        <begin position="299"/>
        <end position="302"/>
    </location>
</feature>
<feature type="helix" evidence="7">
    <location>
        <begin position="306"/>
        <end position="323"/>
    </location>
</feature>
<feature type="helix" evidence="7">
    <location>
        <begin position="354"/>
        <end position="358"/>
    </location>
</feature>
<feature type="turn" evidence="7">
    <location>
        <begin position="364"/>
        <end position="366"/>
    </location>
</feature>
<feature type="helix" evidence="7">
    <location>
        <begin position="367"/>
        <end position="369"/>
    </location>
</feature>
<feature type="helix" evidence="7">
    <location>
        <begin position="377"/>
        <end position="380"/>
    </location>
</feature>
<feature type="helix" evidence="7">
    <location>
        <begin position="386"/>
        <end position="397"/>
    </location>
</feature>
<feature type="helix" evidence="7">
    <location>
        <begin position="422"/>
        <end position="453"/>
    </location>
</feature>
<feature type="helix" evidence="7">
    <location>
        <begin position="465"/>
        <end position="468"/>
    </location>
</feature>
<keyword id="KW-0002">3D-structure</keyword>
<keyword id="KW-0007">Acetylation</keyword>
<keyword id="KW-0148">Chlorophyll</keyword>
<keyword id="KW-0150">Chloroplast</keyword>
<keyword id="KW-0157">Chromophore</keyword>
<keyword id="KW-0903">Direct protein sequencing</keyword>
<keyword id="KW-0464">Manganese</keyword>
<keyword id="KW-0472">Membrane</keyword>
<keyword id="KW-0479">Metal-binding</keyword>
<keyword id="KW-0597">Phosphoprotein</keyword>
<keyword id="KW-0602">Photosynthesis</keyword>
<keyword id="KW-0604">Photosystem II</keyword>
<keyword id="KW-0934">Plastid</keyword>
<keyword id="KW-1185">Reference proteome</keyword>
<keyword id="KW-0793">Thylakoid</keyword>
<keyword id="KW-0812">Transmembrane</keyword>
<keyword id="KW-1133">Transmembrane helix</keyword>
<reference key="1">
    <citation type="journal article" date="1984" name="Nucleic Acids Res.">
        <title>Structure of the spinach chloroplast genes for the D2 and 44 kd reaction-centre proteins of photosystem II and for tRNASer (UGA).</title>
        <authorList>
            <person name="Holschuh K."/>
            <person name="Bottomley W."/>
            <person name="Whitfeld P.R."/>
        </authorList>
    </citation>
    <scope>NUCLEOTIDE SEQUENCE [GENOMIC DNA]</scope>
</reference>
<reference key="2">
    <citation type="journal article" date="1984" name="Curr. Genet.">
        <title>Nucleotide sequence of the clustered genes for the 44kd chlorophyll a apoprotein and the '32kd'-like protein of the photosystem II reaction center in the spinach plastid chromosome.</title>
        <authorList>
            <person name="Alt J."/>
            <person name="Morris J."/>
            <person name="Westhoff P."/>
            <person name="Herrmann R.G."/>
        </authorList>
    </citation>
    <scope>NUCLEOTIDE SEQUENCE [GENOMIC DNA]</scope>
</reference>
<reference key="3">
    <citation type="journal article" date="2001" name="Plant Mol. Biol.">
        <title>The plastid chromosome of spinach (Spinacia oleracea): complete nucleotide sequence and gene organization.</title>
        <authorList>
            <person name="Schmitz-Linneweber C."/>
            <person name="Maier R.M."/>
            <person name="Alcaraz J.-P."/>
            <person name="Cottet A."/>
            <person name="Herrmann R.G."/>
            <person name="Mache R."/>
        </authorList>
    </citation>
    <scope>NUCLEOTIDE SEQUENCE [LARGE SCALE GENOMIC DNA]</scope>
    <source>
        <strain>cv. Geant d'hiver</strain>
        <strain>cv. Monatol</strain>
    </source>
</reference>
<reference key="4">
    <citation type="journal article" date="1988" name="J. Biol. Chem.">
        <title>Tandem mass spectrometry reveals that three photosystem II proteins of spinach chloroplasts contain N-acetyl-O-phosphothreonine at their NH2 termini.</title>
        <authorList>
            <person name="Michel H."/>
            <person name="Hunt D.F."/>
            <person name="Shabanowitz J."/>
            <person name="Bennett J."/>
        </authorList>
    </citation>
    <scope>PROTEIN SEQUENCE OF N-TERMINUS</scope>
    <scope>SUBCELLULAR LOCATION</scope>
    <scope>ACETYLATION AT THR-15</scope>
    <scope>PHOSPHORYLATION AT THR-15</scope>
</reference>
<reference key="5">
    <citation type="journal article" date="2002" name="Proc. Natl. Acad. Sci. U.S.A.">
        <title>Posttranslational modifications in the CP43 subunit of photosystem II.</title>
        <authorList>
            <person name="Anderson L.B."/>
            <person name="Maderia M."/>
            <person name="Ouellette A.J."/>
            <person name="Putnam-Evans C."/>
            <person name="Higgins L."/>
            <person name="Krick T."/>
            <person name="MacCoss M.J."/>
            <person name="Lim H."/>
            <person name="Yates J.R. III"/>
            <person name="Barry B.A."/>
        </authorList>
    </citation>
    <scope>SUSCEPTIBILITY TO OXIDATION</scope>
    <scope>MUTAGENESIS OF TRP-365</scope>
</reference>
<evidence type="ECO:0000255" key="1">
    <source>
        <dbReference type="HAMAP-Rule" id="MF_01496"/>
    </source>
</evidence>
<evidence type="ECO:0000269" key="2">
    <source>
    </source>
</evidence>
<evidence type="ECO:0000269" key="3">
    <source>
    </source>
</evidence>
<evidence type="ECO:0000303" key="4">
    <source>
    </source>
</evidence>
<evidence type="ECO:0000303" key="5">
    <source>
    </source>
</evidence>
<evidence type="ECO:0000305" key="6">
    <source>
    </source>
</evidence>
<evidence type="ECO:0007829" key="7">
    <source>
        <dbReference type="PDB" id="3JCU"/>
    </source>
</evidence>
<name>PSBC_SPIOL</name>
<dbReference type="EMBL" id="M36833">
    <property type="protein sequence ID" value="AAA84631.1"/>
    <property type="molecule type" value="Genomic_DNA"/>
</dbReference>
<dbReference type="EMBL" id="AJ400848">
    <property type="protein sequence ID" value="CAB88722.1"/>
    <property type="molecule type" value="Genomic_DNA"/>
</dbReference>
<dbReference type="PIR" id="B23038">
    <property type="entry name" value="F2SP44"/>
</dbReference>
<dbReference type="PIR" id="T08998">
    <property type="entry name" value="T08998"/>
</dbReference>
<dbReference type="RefSeq" id="NP_054929.1">
    <property type="nucleotide sequence ID" value="NC_002202.1"/>
</dbReference>
<dbReference type="PDB" id="3JCU">
    <property type="method" value="EM"/>
    <property type="resolution" value="3.20 A"/>
    <property type="chains" value="C/c=1-473"/>
</dbReference>
<dbReference type="PDB" id="8Z9D">
    <property type="method" value="EM"/>
    <property type="resolution" value="3.22 A"/>
    <property type="chains" value="C/CC/Cc/c=1-473"/>
</dbReference>
<dbReference type="PDBsum" id="3JCU"/>
<dbReference type="PDBsum" id="8Z9D"/>
<dbReference type="EMDB" id="EMD-39860"/>
<dbReference type="SMR" id="P06003"/>
<dbReference type="DIP" id="DIP-62009N"/>
<dbReference type="FunCoup" id="P06003">
    <property type="interactions" value="316"/>
</dbReference>
<dbReference type="IntAct" id="P06003">
    <property type="interactions" value="1"/>
</dbReference>
<dbReference type="STRING" id="3562.P06003"/>
<dbReference type="CarbonylDB" id="P06003"/>
<dbReference type="iPTMnet" id="P06003"/>
<dbReference type="GeneID" id="2715609"/>
<dbReference type="KEGG" id="soe:2715609"/>
<dbReference type="InParanoid" id="P06003"/>
<dbReference type="OrthoDB" id="1926060at2759"/>
<dbReference type="Proteomes" id="UP001155700">
    <property type="component" value="Chloroplast Pltd"/>
</dbReference>
<dbReference type="GO" id="GO:0009535">
    <property type="term" value="C:chloroplast thylakoid membrane"/>
    <property type="evidence" value="ECO:0007669"/>
    <property type="project" value="UniProtKB-SubCell"/>
</dbReference>
<dbReference type="GO" id="GO:0009523">
    <property type="term" value="C:photosystem II"/>
    <property type="evidence" value="ECO:0007669"/>
    <property type="project" value="UniProtKB-KW"/>
</dbReference>
<dbReference type="GO" id="GO:0016168">
    <property type="term" value="F:chlorophyll binding"/>
    <property type="evidence" value="ECO:0007669"/>
    <property type="project" value="UniProtKB-UniRule"/>
</dbReference>
<dbReference type="GO" id="GO:0045156">
    <property type="term" value="F:electron transporter, transferring electrons within the cyclic electron transport pathway of photosynthesis activity"/>
    <property type="evidence" value="ECO:0007669"/>
    <property type="project" value="InterPro"/>
</dbReference>
<dbReference type="GO" id="GO:0046872">
    <property type="term" value="F:metal ion binding"/>
    <property type="evidence" value="ECO:0007669"/>
    <property type="project" value="UniProtKB-KW"/>
</dbReference>
<dbReference type="GO" id="GO:0009772">
    <property type="term" value="P:photosynthetic electron transport in photosystem II"/>
    <property type="evidence" value="ECO:0007669"/>
    <property type="project" value="InterPro"/>
</dbReference>
<dbReference type="FunFam" id="1.10.10.670:FF:000001">
    <property type="entry name" value="Photosystem II CP43 reaction center protein"/>
    <property type="match status" value="1"/>
</dbReference>
<dbReference type="Gene3D" id="1.10.10.670">
    <property type="entry name" value="photosystem ii from thermosynechococcus elongatus"/>
    <property type="match status" value="1"/>
</dbReference>
<dbReference type="HAMAP" id="MF_01496">
    <property type="entry name" value="PSII_PsbC_CP43"/>
    <property type="match status" value="1"/>
</dbReference>
<dbReference type="InterPro" id="IPR000932">
    <property type="entry name" value="PS_antenna-like"/>
</dbReference>
<dbReference type="InterPro" id="IPR036001">
    <property type="entry name" value="PS_II_antenna-like_sf"/>
</dbReference>
<dbReference type="InterPro" id="IPR005869">
    <property type="entry name" value="PSII_PsbC"/>
</dbReference>
<dbReference type="InterPro" id="IPR044900">
    <property type="entry name" value="PSII_PsbC_sf"/>
</dbReference>
<dbReference type="NCBIfam" id="TIGR01153">
    <property type="entry name" value="psbC"/>
    <property type="match status" value="1"/>
</dbReference>
<dbReference type="Pfam" id="PF00421">
    <property type="entry name" value="PSII"/>
    <property type="match status" value="1"/>
</dbReference>
<dbReference type="SUPFAM" id="SSF161077">
    <property type="entry name" value="Photosystem II antenna protein-like"/>
    <property type="match status" value="1"/>
</dbReference>
<protein>
    <recommendedName>
        <fullName evidence="1">Photosystem II CP43 reaction center protein</fullName>
    </recommendedName>
    <alternativeName>
        <fullName evidence="1">PSII 43 kDa protein</fullName>
    </alternativeName>
    <alternativeName>
        <fullName evidence="4 5">Photosystem II 44 kDa chlorophyll apoprotein</fullName>
    </alternativeName>
    <alternativeName>
        <fullName evidence="1">Protein CP-43</fullName>
    </alternativeName>
</protein>
<sequence length="473" mass="51834">MKTLYSLRRFYPVETLFNGTLTLAGRDQETTGFAWWAGNARLINLSGKLLGAHVAHAGLIVFWAGAMNLFEVAHFVPEKPMYEQGLILLPHLATLGWGVGPGGEVIDTFPYFVSGVLHLISSAVLGFGGIYHALLGPETLEESFPFFGYVWKDRNKMTTILGIHLILLGIGAFLLVFKALYFGGVYDTWAPGGGDVRKITNVTLSPSIIFGCLLKSPFGGEGWIVSVDDLEDIIGGHVWIGVICILGGIWHILTKPFAWARRALVWSGEAYLSYSLAALSVFGFIACCFVWFNNTAYPSEFYGPTGPEASQAQAFTFLVRDQRLGANVGSAQGPTGLGKYLMRSPTGEVIFGGETMRFWDLRAPWLEPLRGPNGLDLSRLKKDIQPWQERRSAEYMTHAPLGSLNSVGGVATEINAVNYVSPRSWLSTSHFVLGFFLFVGHLWHAGRARAAAAGFEKGIDRDFEPVLSMTPLN</sequence>